<name>PYRG_HAEIE</name>
<gene>
    <name evidence="1" type="primary">pyrG</name>
    <name type="ordered locus">CGSHiEE_06690</name>
</gene>
<reference key="1">
    <citation type="journal article" date="2007" name="Genome Biol.">
        <title>Characterization and modeling of the Haemophilus influenzae core and supragenomes based on the complete genomic sequences of Rd and 12 clinical nontypeable strains.</title>
        <authorList>
            <person name="Hogg J.S."/>
            <person name="Hu F.Z."/>
            <person name="Janto B."/>
            <person name="Boissy R."/>
            <person name="Hayes J."/>
            <person name="Keefe R."/>
            <person name="Post J.C."/>
            <person name="Ehrlich G.D."/>
        </authorList>
    </citation>
    <scope>NUCLEOTIDE SEQUENCE [LARGE SCALE GENOMIC DNA]</scope>
    <source>
        <strain>PittEE</strain>
    </source>
</reference>
<protein>
    <recommendedName>
        <fullName evidence="1">CTP synthase</fullName>
        <ecNumber evidence="1">6.3.4.2</ecNumber>
    </recommendedName>
    <alternativeName>
        <fullName evidence="1">Cytidine 5'-triphosphate synthase</fullName>
    </alternativeName>
    <alternativeName>
        <fullName evidence="1">Cytidine triphosphate synthetase</fullName>
        <shortName evidence="1">CTP synthetase</shortName>
        <shortName evidence="1">CTPS</shortName>
    </alternativeName>
    <alternativeName>
        <fullName evidence="1">UTP--ammonia ligase</fullName>
    </alternativeName>
</protein>
<sequence length="545" mass="60212">MATNYIFVTGGVVSSLGKGIAAASLAAILEARGLNVTIMKLDPYINVDPGTMSPTQHGEVFVTQDGAETDLDLGHYERFIRTKMTKRNNFTTGKIYSEVLRKERRGDYLGATIQVIPHITNEIKDRVIAGAQGHDVVIVEVGGTVGDIESLPFLEALRQLAVQVGREHTLFMHLTLVPYIPTAGEVKTKPTQHSVKELLSIGIQPDVLICRSDRMIPPNERAKIALFCNVAERAVISLKDVNSIYQIPALLKSQGLDDFVCERFRLTCPEADLTEWEQVLYKQANPVGEVTIGMVGKYTELPDAYKSVNEALKHAGLTNRLSVSIKYIDSQDVETKGVEVLKGVDGILVPGGFGYRGVEGKIRTAQYARENKIPYLGICLGMQIALIEYARNVAGLTKANSSEFDKDCEQPVVALITEWQDAEGNTEVRTDESDLGGTMRLGAQQCHLVSGSRARELYGKETIEERHRHRYEVNNTLLPQIEKAGLKVTGLSADKKLVEIIEVPNHPWFVACQFHPEFTSTPRDGHPLFAGFVKAAYENHKKSVK</sequence>
<comment type="function">
    <text evidence="1">Catalyzes the ATP-dependent amination of UTP to CTP with either L-glutamine or ammonia as the source of nitrogen. Regulates intracellular CTP levels through interactions with the four ribonucleotide triphosphates.</text>
</comment>
<comment type="catalytic activity">
    <reaction evidence="1">
        <text>UTP + L-glutamine + ATP + H2O = CTP + L-glutamate + ADP + phosphate + 2 H(+)</text>
        <dbReference type="Rhea" id="RHEA:26426"/>
        <dbReference type="ChEBI" id="CHEBI:15377"/>
        <dbReference type="ChEBI" id="CHEBI:15378"/>
        <dbReference type="ChEBI" id="CHEBI:29985"/>
        <dbReference type="ChEBI" id="CHEBI:30616"/>
        <dbReference type="ChEBI" id="CHEBI:37563"/>
        <dbReference type="ChEBI" id="CHEBI:43474"/>
        <dbReference type="ChEBI" id="CHEBI:46398"/>
        <dbReference type="ChEBI" id="CHEBI:58359"/>
        <dbReference type="ChEBI" id="CHEBI:456216"/>
        <dbReference type="EC" id="6.3.4.2"/>
    </reaction>
</comment>
<comment type="catalytic activity">
    <reaction evidence="1">
        <text>L-glutamine + H2O = L-glutamate + NH4(+)</text>
        <dbReference type="Rhea" id="RHEA:15889"/>
        <dbReference type="ChEBI" id="CHEBI:15377"/>
        <dbReference type="ChEBI" id="CHEBI:28938"/>
        <dbReference type="ChEBI" id="CHEBI:29985"/>
        <dbReference type="ChEBI" id="CHEBI:58359"/>
    </reaction>
</comment>
<comment type="catalytic activity">
    <reaction evidence="1">
        <text>UTP + NH4(+) + ATP = CTP + ADP + phosphate + 2 H(+)</text>
        <dbReference type="Rhea" id="RHEA:16597"/>
        <dbReference type="ChEBI" id="CHEBI:15378"/>
        <dbReference type="ChEBI" id="CHEBI:28938"/>
        <dbReference type="ChEBI" id="CHEBI:30616"/>
        <dbReference type="ChEBI" id="CHEBI:37563"/>
        <dbReference type="ChEBI" id="CHEBI:43474"/>
        <dbReference type="ChEBI" id="CHEBI:46398"/>
        <dbReference type="ChEBI" id="CHEBI:456216"/>
    </reaction>
</comment>
<comment type="activity regulation">
    <text evidence="1">Allosterically activated by GTP, when glutamine is the substrate; GTP has no effect on the reaction when ammonia is the substrate. The allosteric effector GTP functions by stabilizing the protein conformation that binds the tetrahedral intermediate(s) formed during glutamine hydrolysis. Inhibited by the product CTP, via allosteric rather than competitive inhibition.</text>
</comment>
<comment type="pathway">
    <text evidence="1">Pyrimidine metabolism; CTP biosynthesis via de novo pathway; CTP from UDP: step 2/2.</text>
</comment>
<comment type="subunit">
    <text evidence="1">Homotetramer.</text>
</comment>
<comment type="miscellaneous">
    <text evidence="1">CTPSs have evolved a hybrid strategy for distinguishing between UTP and CTP. The overlapping regions of the product feedback inhibitory and substrate sites recognize a common feature in both compounds, the triphosphate moiety. To differentiate isosteric substrate and product pyrimidine rings, an additional pocket far from the expected kinase/ligase catalytic site, specifically recognizes the cytosine and ribose portions of the product inhibitor.</text>
</comment>
<comment type="similarity">
    <text evidence="1">Belongs to the CTP synthase family.</text>
</comment>
<dbReference type="EC" id="6.3.4.2" evidence="1"/>
<dbReference type="EMBL" id="CP000671">
    <property type="protein sequence ID" value="ABQ98679.1"/>
    <property type="molecule type" value="Genomic_DNA"/>
</dbReference>
<dbReference type="SMR" id="A5UD28"/>
<dbReference type="MEROPS" id="C26.964"/>
<dbReference type="KEGG" id="hip:CGSHiEE_06690"/>
<dbReference type="HOGENOM" id="CLU_011675_5_0_6"/>
<dbReference type="UniPathway" id="UPA00159">
    <property type="reaction ID" value="UER00277"/>
</dbReference>
<dbReference type="GO" id="GO:0005829">
    <property type="term" value="C:cytosol"/>
    <property type="evidence" value="ECO:0007669"/>
    <property type="project" value="TreeGrafter"/>
</dbReference>
<dbReference type="GO" id="GO:0005524">
    <property type="term" value="F:ATP binding"/>
    <property type="evidence" value="ECO:0007669"/>
    <property type="project" value="UniProtKB-KW"/>
</dbReference>
<dbReference type="GO" id="GO:0003883">
    <property type="term" value="F:CTP synthase activity"/>
    <property type="evidence" value="ECO:0007669"/>
    <property type="project" value="UniProtKB-UniRule"/>
</dbReference>
<dbReference type="GO" id="GO:0004359">
    <property type="term" value="F:glutaminase activity"/>
    <property type="evidence" value="ECO:0007669"/>
    <property type="project" value="RHEA"/>
</dbReference>
<dbReference type="GO" id="GO:0042802">
    <property type="term" value="F:identical protein binding"/>
    <property type="evidence" value="ECO:0007669"/>
    <property type="project" value="TreeGrafter"/>
</dbReference>
<dbReference type="GO" id="GO:0046872">
    <property type="term" value="F:metal ion binding"/>
    <property type="evidence" value="ECO:0007669"/>
    <property type="project" value="UniProtKB-KW"/>
</dbReference>
<dbReference type="GO" id="GO:0044210">
    <property type="term" value="P:'de novo' CTP biosynthetic process"/>
    <property type="evidence" value="ECO:0007669"/>
    <property type="project" value="UniProtKB-UniRule"/>
</dbReference>
<dbReference type="GO" id="GO:0019856">
    <property type="term" value="P:pyrimidine nucleobase biosynthetic process"/>
    <property type="evidence" value="ECO:0007669"/>
    <property type="project" value="TreeGrafter"/>
</dbReference>
<dbReference type="CDD" id="cd03113">
    <property type="entry name" value="CTPS_N"/>
    <property type="match status" value="1"/>
</dbReference>
<dbReference type="CDD" id="cd01746">
    <property type="entry name" value="GATase1_CTP_Synthase"/>
    <property type="match status" value="1"/>
</dbReference>
<dbReference type="FunFam" id="3.40.50.300:FF:000009">
    <property type="entry name" value="CTP synthase"/>
    <property type="match status" value="1"/>
</dbReference>
<dbReference type="FunFam" id="3.40.50.880:FF:000002">
    <property type="entry name" value="CTP synthase"/>
    <property type="match status" value="1"/>
</dbReference>
<dbReference type="Gene3D" id="3.40.50.880">
    <property type="match status" value="1"/>
</dbReference>
<dbReference type="Gene3D" id="3.40.50.300">
    <property type="entry name" value="P-loop containing nucleotide triphosphate hydrolases"/>
    <property type="match status" value="1"/>
</dbReference>
<dbReference type="HAMAP" id="MF_01227">
    <property type="entry name" value="PyrG"/>
    <property type="match status" value="1"/>
</dbReference>
<dbReference type="InterPro" id="IPR029062">
    <property type="entry name" value="Class_I_gatase-like"/>
</dbReference>
<dbReference type="InterPro" id="IPR004468">
    <property type="entry name" value="CTP_synthase"/>
</dbReference>
<dbReference type="InterPro" id="IPR017456">
    <property type="entry name" value="CTP_synthase_N"/>
</dbReference>
<dbReference type="InterPro" id="IPR017926">
    <property type="entry name" value="GATASE"/>
</dbReference>
<dbReference type="InterPro" id="IPR033828">
    <property type="entry name" value="GATase1_CTP_Synthase"/>
</dbReference>
<dbReference type="InterPro" id="IPR027417">
    <property type="entry name" value="P-loop_NTPase"/>
</dbReference>
<dbReference type="NCBIfam" id="NF003792">
    <property type="entry name" value="PRK05380.1"/>
    <property type="match status" value="1"/>
</dbReference>
<dbReference type="NCBIfam" id="TIGR00337">
    <property type="entry name" value="PyrG"/>
    <property type="match status" value="1"/>
</dbReference>
<dbReference type="PANTHER" id="PTHR11550">
    <property type="entry name" value="CTP SYNTHASE"/>
    <property type="match status" value="1"/>
</dbReference>
<dbReference type="PANTHER" id="PTHR11550:SF0">
    <property type="entry name" value="CTP SYNTHASE-RELATED"/>
    <property type="match status" value="1"/>
</dbReference>
<dbReference type="Pfam" id="PF06418">
    <property type="entry name" value="CTP_synth_N"/>
    <property type="match status" value="1"/>
</dbReference>
<dbReference type="Pfam" id="PF00117">
    <property type="entry name" value="GATase"/>
    <property type="match status" value="1"/>
</dbReference>
<dbReference type="SUPFAM" id="SSF52317">
    <property type="entry name" value="Class I glutamine amidotransferase-like"/>
    <property type="match status" value="1"/>
</dbReference>
<dbReference type="SUPFAM" id="SSF52540">
    <property type="entry name" value="P-loop containing nucleoside triphosphate hydrolases"/>
    <property type="match status" value="1"/>
</dbReference>
<dbReference type="PROSITE" id="PS51273">
    <property type="entry name" value="GATASE_TYPE_1"/>
    <property type="match status" value="1"/>
</dbReference>
<evidence type="ECO:0000255" key="1">
    <source>
        <dbReference type="HAMAP-Rule" id="MF_01227"/>
    </source>
</evidence>
<feature type="chain" id="PRO_1000139467" description="CTP synthase">
    <location>
        <begin position="1"/>
        <end position="545"/>
    </location>
</feature>
<feature type="domain" description="Glutamine amidotransferase type-1" evidence="1">
    <location>
        <begin position="291"/>
        <end position="542"/>
    </location>
</feature>
<feature type="region of interest" description="Amidoligase domain" evidence="1">
    <location>
        <begin position="1"/>
        <end position="266"/>
    </location>
</feature>
<feature type="active site" description="Nucleophile; for glutamine hydrolysis" evidence="1">
    <location>
        <position position="379"/>
    </location>
</feature>
<feature type="active site" evidence="1">
    <location>
        <position position="515"/>
    </location>
</feature>
<feature type="active site" evidence="1">
    <location>
        <position position="517"/>
    </location>
</feature>
<feature type="binding site" evidence="1">
    <location>
        <position position="14"/>
    </location>
    <ligand>
        <name>CTP</name>
        <dbReference type="ChEBI" id="CHEBI:37563"/>
        <note>allosteric inhibitor</note>
    </ligand>
</feature>
<feature type="binding site" evidence="1">
    <location>
        <position position="14"/>
    </location>
    <ligand>
        <name>UTP</name>
        <dbReference type="ChEBI" id="CHEBI:46398"/>
    </ligand>
</feature>
<feature type="binding site" evidence="1">
    <location>
        <begin position="15"/>
        <end position="20"/>
    </location>
    <ligand>
        <name>ATP</name>
        <dbReference type="ChEBI" id="CHEBI:30616"/>
    </ligand>
</feature>
<feature type="binding site" evidence="1">
    <location>
        <position position="72"/>
    </location>
    <ligand>
        <name>ATP</name>
        <dbReference type="ChEBI" id="CHEBI:30616"/>
    </ligand>
</feature>
<feature type="binding site" evidence="1">
    <location>
        <position position="72"/>
    </location>
    <ligand>
        <name>Mg(2+)</name>
        <dbReference type="ChEBI" id="CHEBI:18420"/>
    </ligand>
</feature>
<feature type="binding site" evidence="1">
    <location>
        <position position="140"/>
    </location>
    <ligand>
        <name>Mg(2+)</name>
        <dbReference type="ChEBI" id="CHEBI:18420"/>
    </ligand>
</feature>
<feature type="binding site" evidence="1">
    <location>
        <begin position="147"/>
        <end position="149"/>
    </location>
    <ligand>
        <name>CTP</name>
        <dbReference type="ChEBI" id="CHEBI:37563"/>
        <note>allosteric inhibitor</note>
    </ligand>
</feature>
<feature type="binding site" evidence="1">
    <location>
        <begin position="187"/>
        <end position="192"/>
    </location>
    <ligand>
        <name>CTP</name>
        <dbReference type="ChEBI" id="CHEBI:37563"/>
        <note>allosteric inhibitor</note>
    </ligand>
</feature>
<feature type="binding site" evidence="1">
    <location>
        <begin position="187"/>
        <end position="192"/>
    </location>
    <ligand>
        <name>UTP</name>
        <dbReference type="ChEBI" id="CHEBI:46398"/>
    </ligand>
</feature>
<feature type="binding site" evidence="1">
    <location>
        <position position="223"/>
    </location>
    <ligand>
        <name>CTP</name>
        <dbReference type="ChEBI" id="CHEBI:37563"/>
        <note>allosteric inhibitor</note>
    </ligand>
</feature>
<feature type="binding site" evidence="1">
    <location>
        <position position="223"/>
    </location>
    <ligand>
        <name>UTP</name>
        <dbReference type="ChEBI" id="CHEBI:46398"/>
    </ligand>
</feature>
<feature type="binding site" evidence="1">
    <location>
        <begin position="239"/>
        <end position="241"/>
    </location>
    <ligand>
        <name>ATP</name>
        <dbReference type="ChEBI" id="CHEBI:30616"/>
    </ligand>
</feature>
<feature type="binding site" evidence="1">
    <location>
        <position position="352"/>
    </location>
    <ligand>
        <name>L-glutamine</name>
        <dbReference type="ChEBI" id="CHEBI:58359"/>
    </ligand>
</feature>
<feature type="binding site" evidence="1">
    <location>
        <begin position="380"/>
        <end position="383"/>
    </location>
    <ligand>
        <name>L-glutamine</name>
        <dbReference type="ChEBI" id="CHEBI:58359"/>
    </ligand>
</feature>
<feature type="binding site" evidence="1">
    <location>
        <position position="403"/>
    </location>
    <ligand>
        <name>L-glutamine</name>
        <dbReference type="ChEBI" id="CHEBI:58359"/>
    </ligand>
</feature>
<feature type="binding site" evidence="1">
    <location>
        <position position="470"/>
    </location>
    <ligand>
        <name>L-glutamine</name>
        <dbReference type="ChEBI" id="CHEBI:58359"/>
    </ligand>
</feature>
<keyword id="KW-0067">ATP-binding</keyword>
<keyword id="KW-0315">Glutamine amidotransferase</keyword>
<keyword id="KW-0436">Ligase</keyword>
<keyword id="KW-0460">Magnesium</keyword>
<keyword id="KW-0479">Metal-binding</keyword>
<keyword id="KW-0547">Nucleotide-binding</keyword>
<keyword id="KW-0665">Pyrimidine biosynthesis</keyword>
<accession>A5UD28</accession>
<organism>
    <name type="scientific">Haemophilus influenzae (strain PittEE)</name>
    <dbReference type="NCBI Taxonomy" id="374930"/>
    <lineage>
        <taxon>Bacteria</taxon>
        <taxon>Pseudomonadati</taxon>
        <taxon>Pseudomonadota</taxon>
        <taxon>Gammaproteobacteria</taxon>
        <taxon>Pasteurellales</taxon>
        <taxon>Pasteurellaceae</taxon>
        <taxon>Haemophilus</taxon>
    </lineage>
</organism>
<proteinExistence type="inferred from homology"/>